<comment type="function">
    <text evidence="1">Probable component of the endoplasmic reticulum-associated degradation (ERAD) pathway.</text>
</comment>
<comment type="similarity">
    <text evidence="3">Belongs to the LCL2 family.</text>
</comment>
<dbReference type="EMBL" id="CM001233">
    <property type="protein sequence ID" value="EHA52480.1"/>
    <property type="molecule type" value="Genomic_DNA"/>
</dbReference>
<dbReference type="RefSeq" id="XP_003712287.1">
    <property type="nucleotide sequence ID" value="XM_003712239.1"/>
</dbReference>
<dbReference type="STRING" id="242507.A4QUA4"/>
<dbReference type="EnsemblFungi" id="MGG_09465T0">
    <property type="protein sequence ID" value="MGG_09465T0"/>
    <property type="gene ID" value="MGG_09465"/>
</dbReference>
<dbReference type="GeneID" id="2680508"/>
<dbReference type="KEGG" id="mgr:MGG_09465"/>
<dbReference type="VEuPathDB" id="FungiDB:MGG_09465"/>
<dbReference type="eggNOG" id="ENOG502S416">
    <property type="taxonomic scope" value="Eukaryota"/>
</dbReference>
<dbReference type="HOGENOM" id="CLU_142363_0_0_1"/>
<dbReference type="InParanoid" id="A4QUA4"/>
<dbReference type="OMA" id="DNYLCPD"/>
<dbReference type="OrthoDB" id="2234316at2759"/>
<dbReference type="Proteomes" id="UP000009058">
    <property type="component" value="Chromosome 3"/>
</dbReference>
<dbReference type="GO" id="GO:0036503">
    <property type="term" value="P:ERAD pathway"/>
    <property type="evidence" value="ECO:0007669"/>
    <property type="project" value="TreeGrafter"/>
</dbReference>
<dbReference type="CDD" id="cd23996">
    <property type="entry name" value="LCL2-like"/>
    <property type="match status" value="1"/>
</dbReference>
<dbReference type="InterPro" id="IPR034543">
    <property type="entry name" value="LCL2"/>
</dbReference>
<dbReference type="PANTHER" id="PTHR38425">
    <property type="entry name" value="LONG CHRONOLOGICAL LIFESPAN PROTEIN 2"/>
    <property type="match status" value="1"/>
</dbReference>
<dbReference type="PANTHER" id="PTHR38425:SF1">
    <property type="entry name" value="LONG CHRONOLOGICAL LIFESPAN PROTEIN 2"/>
    <property type="match status" value="1"/>
</dbReference>
<reference key="1">
    <citation type="journal article" date="2005" name="Nature">
        <title>The genome sequence of the rice blast fungus Magnaporthe grisea.</title>
        <authorList>
            <person name="Dean R.A."/>
            <person name="Talbot N.J."/>
            <person name="Ebbole D.J."/>
            <person name="Farman M.L."/>
            <person name="Mitchell T.K."/>
            <person name="Orbach M.J."/>
            <person name="Thon M.R."/>
            <person name="Kulkarni R."/>
            <person name="Xu J.-R."/>
            <person name="Pan H."/>
            <person name="Read N.D."/>
            <person name="Lee Y.-H."/>
            <person name="Carbone I."/>
            <person name="Brown D."/>
            <person name="Oh Y.Y."/>
            <person name="Donofrio N."/>
            <person name="Jeong J.S."/>
            <person name="Soanes D.M."/>
            <person name="Djonovic S."/>
            <person name="Kolomiets E."/>
            <person name="Rehmeyer C."/>
            <person name="Li W."/>
            <person name="Harding M."/>
            <person name="Kim S."/>
            <person name="Lebrun M.-H."/>
            <person name="Bohnert H."/>
            <person name="Coughlan S."/>
            <person name="Butler J."/>
            <person name="Calvo S.E."/>
            <person name="Ma L.-J."/>
            <person name="Nicol R."/>
            <person name="Purcell S."/>
            <person name="Nusbaum C."/>
            <person name="Galagan J.E."/>
            <person name="Birren B.W."/>
        </authorList>
    </citation>
    <scope>NUCLEOTIDE SEQUENCE [LARGE SCALE GENOMIC DNA]</scope>
    <source>
        <strain>70-15 / ATCC MYA-4617 / FGSC 8958</strain>
    </source>
</reference>
<evidence type="ECO:0000250" key="1"/>
<evidence type="ECO:0000255" key="2"/>
<evidence type="ECO:0000305" key="3"/>
<protein>
    <recommendedName>
        <fullName>Long chronological lifespan protein 2</fullName>
    </recommendedName>
</protein>
<accession>A4QUA4</accession>
<accession>G4N1W5</accession>
<sequence>MQSPVLLQLLLLALMGTVSAQFGGFFDQMFGGGGGGGGGQQQRQEQNVPSDSAWYRSNVDAAVCSNYLCPDTLACVHFPHHCPCPFPDHEDKFELAEGQRICVSRGGFKAGEAARKVELARKGLL</sequence>
<feature type="signal peptide" evidence="2">
    <location>
        <begin position="1"/>
        <end position="20"/>
    </location>
</feature>
<feature type="chain" id="PRO_0000408612" description="Long chronological lifespan protein 2">
    <location>
        <begin position="21"/>
        <end position="125"/>
    </location>
</feature>
<proteinExistence type="inferred from homology"/>
<gene>
    <name type="primary">LCL2</name>
    <name type="ORF">MGG_09465</name>
</gene>
<name>LCL2_PYRO7</name>
<organism>
    <name type="scientific">Pyricularia oryzae (strain 70-15 / ATCC MYA-4617 / FGSC 8958)</name>
    <name type="common">Rice blast fungus</name>
    <name type="synonym">Magnaporthe oryzae</name>
    <dbReference type="NCBI Taxonomy" id="242507"/>
    <lineage>
        <taxon>Eukaryota</taxon>
        <taxon>Fungi</taxon>
        <taxon>Dikarya</taxon>
        <taxon>Ascomycota</taxon>
        <taxon>Pezizomycotina</taxon>
        <taxon>Sordariomycetes</taxon>
        <taxon>Sordariomycetidae</taxon>
        <taxon>Magnaporthales</taxon>
        <taxon>Pyriculariaceae</taxon>
        <taxon>Pyricularia</taxon>
    </lineage>
</organism>
<keyword id="KW-1185">Reference proteome</keyword>
<keyword id="KW-0732">Signal</keyword>